<proteinExistence type="inferred from homology"/>
<organism>
    <name type="scientific">Vibrio vulnificus (strain YJ016)</name>
    <dbReference type="NCBI Taxonomy" id="196600"/>
    <lineage>
        <taxon>Bacteria</taxon>
        <taxon>Pseudomonadati</taxon>
        <taxon>Pseudomonadota</taxon>
        <taxon>Gammaproteobacteria</taxon>
        <taxon>Vibrionales</taxon>
        <taxon>Vibrionaceae</taxon>
        <taxon>Vibrio</taxon>
    </lineage>
</organism>
<name>Y5436_VIBVY</name>
<reference key="1">
    <citation type="journal article" date="2003" name="Genome Res.">
        <title>Comparative genome analysis of Vibrio vulnificus, a marine pathogen.</title>
        <authorList>
            <person name="Chen C.-Y."/>
            <person name="Wu K.-M."/>
            <person name="Chang Y.-C."/>
            <person name="Chang C.-H."/>
            <person name="Tsai H.-C."/>
            <person name="Liao T.-L."/>
            <person name="Liu Y.-M."/>
            <person name="Chen H.-J."/>
            <person name="Shen A.B.-T."/>
            <person name="Li J.-C."/>
            <person name="Su T.-L."/>
            <person name="Shao C.-P."/>
            <person name="Lee C.-T."/>
            <person name="Hor L.-I."/>
            <person name="Tsai S.-F."/>
        </authorList>
    </citation>
    <scope>NUCLEOTIDE SEQUENCE [LARGE SCALE GENOMIC DNA]</scope>
    <source>
        <strain>YJ016</strain>
    </source>
</reference>
<accession>Q7MCF1</accession>
<dbReference type="EMBL" id="BA000038">
    <property type="protein sequence ID" value="BAC97462.1"/>
    <property type="status" value="ALT_INIT"/>
    <property type="molecule type" value="Genomic_DNA"/>
</dbReference>
<dbReference type="RefSeq" id="WP_181392283.1">
    <property type="nucleotide sequence ID" value="NC_005140.1"/>
</dbReference>
<dbReference type="SMR" id="Q7MCF1"/>
<dbReference type="STRING" id="672.VV93_v1c43420"/>
<dbReference type="KEGG" id="vvy:VVA1436"/>
<dbReference type="PATRIC" id="fig|196600.6.peg.4577"/>
<dbReference type="eggNOG" id="COG1342">
    <property type="taxonomic scope" value="Bacteria"/>
</dbReference>
<dbReference type="HOGENOM" id="CLU_094511_2_1_6"/>
<dbReference type="Proteomes" id="UP000002675">
    <property type="component" value="Chromosome II"/>
</dbReference>
<dbReference type="Gene3D" id="1.10.10.10">
    <property type="entry name" value="Winged helix-like DNA-binding domain superfamily/Winged helix DNA-binding domain"/>
    <property type="match status" value="1"/>
</dbReference>
<dbReference type="HAMAP" id="MF_00674">
    <property type="entry name" value="UPF0251"/>
    <property type="match status" value="1"/>
</dbReference>
<dbReference type="InterPro" id="IPR002852">
    <property type="entry name" value="UPF0251"/>
</dbReference>
<dbReference type="InterPro" id="IPR036388">
    <property type="entry name" value="WH-like_DNA-bd_sf"/>
</dbReference>
<dbReference type="PANTHER" id="PTHR37478">
    <property type="match status" value="1"/>
</dbReference>
<dbReference type="PANTHER" id="PTHR37478:SF2">
    <property type="entry name" value="UPF0251 PROTEIN TK0562"/>
    <property type="match status" value="1"/>
</dbReference>
<dbReference type="Pfam" id="PF02001">
    <property type="entry name" value="DUF134"/>
    <property type="match status" value="1"/>
</dbReference>
<gene>
    <name type="ordered locus">VVA1436</name>
</gene>
<feature type="chain" id="PRO_0000147595" description="UPF0251 protein VVA1436">
    <location>
        <begin position="1"/>
        <end position="100"/>
    </location>
</feature>
<protein>
    <recommendedName>
        <fullName evidence="1">UPF0251 protein VVA1436</fullName>
    </recommendedName>
</protein>
<comment type="similarity">
    <text evidence="1">Belongs to the UPF0251 family.</text>
</comment>
<comment type="sequence caution" evidence="2">
    <conflict type="erroneous initiation">
        <sequence resource="EMBL-CDS" id="BAC97462"/>
    </conflict>
</comment>
<evidence type="ECO:0000255" key="1">
    <source>
        <dbReference type="HAMAP-Rule" id="MF_00674"/>
    </source>
</evidence>
<evidence type="ECO:0000305" key="2"/>
<sequence>MPRPKKPRTIGCMPKASCFKPNGIPAHNLPCIALEADELEALRLADVLQLHQLEAAQSMGVSRQTFGNIIKRARNKVALCLVEGKVLTLPNQSQDKEKEA</sequence>